<comment type="function">
    <text evidence="1">Catalyzes the reversible isomerization of glucose-6-phosphate to fructose-6-phosphate.</text>
</comment>
<comment type="catalytic activity">
    <reaction evidence="1">
        <text>alpha-D-glucose 6-phosphate = beta-D-fructose 6-phosphate</text>
        <dbReference type="Rhea" id="RHEA:11816"/>
        <dbReference type="ChEBI" id="CHEBI:57634"/>
        <dbReference type="ChEBI" id="CHEBI:58225"/>
        <dbReference type="EC" id="5.3.1.9"/>
    </reaction>
</comment>
<comment type="pathway">
    <text evidence="1">Carbohydrate biosynthesis; gluconeogenesis.</text>
</comment>
<comment type="pathway">
    <text evidence="1">Carbohydrate degradation; glycolysis; D-glyceraldehyde 3-phosphate and glycerone phosphate from D-glucose: step 2/4.</text>
</comment>
<comment type="subcellular location">
    <subcellularLocation>
        <location evidence="1">Cytoplasm</location>
    </subcellularLocation>
</comment>
<comment type="similarity">
    <text evidence="1">Belongs to the GPI family.</text>
</comment>
<feature type="chain" id="PRO_1000013982" description="Glucose-6-phosphate isomerase">
    <location>
        <begin position="1"/>
        <end position="445"/>
    </location>
</feature>
<feature type="active site" description="Proton donor" evidence="1">
    <location>
        <position position="284"/>
    </location>
</feature>
<feature type="active site" evidence="1">
    <location>
        <position position="305"/>
    </location>
</feature>
<feature type="active site" evidence="1">
    <location>
        <position position="419"/>
    </location>
</feature>
<proteinExistence type="inferred from homology"/>
<organism>
    <name type="scientific">Leptospira borgpetersenii serovar Hardjo-bovis (strain JB197)</name>
    <dbReference type="NCBI Taxonomy" id="355277"/>
    <lineage>
        <taxon>Bacteria</taxon>
        <taxon>Pseudomonadati</taxon>
        <taxon>Spirochaetota</taxon>
        <taxon>Spirochaetia</taxon>
        <taxon>Leptospirales</taxon>
        <taxon>Leptospiraceae</taxon>
        <taxon>Leptospira</taxon>
    </lineage>
</organism>
<protein>
    <recommendedName>
        <fullName evidence="1">Glucose-6-phosphate isomerase</fullName>
        <shortName evidence="1">GPI</shortName>
        <ecNumber evidence="1">5.3.1.9</ecNumber>
    </recommendedName>
    <alternativeName>
        <fullName evidence="1">Phosphoglucose isomerase</fullName>
        <shortName evidence="1">PGI</shortName>
    </alternativeName>
    <alternativeName>
        <fullName evidence="1">Phosphohexose isomerase</fullName>
        <shortName evidence="1">PHI</shortName>
    </alternativeName>
</protein>
<keyword id="KW-0963">Cytoplasm</keyword>
<keyword id="KW-0312">Gluconeogenesis</keyword>
<keyword id="KW-0324">Glycolysis</keyword>
<keyword id="KW-0413">Isomerase</keyword>
<sequence>MIRLETRFASSFVNSRKFESFLTEAESSRRTLHSFQGKGNEYLGWLNLPKEIKESEIEKIIQVAQRLRDSSEVIVVIGIGGSYLGSRAVLEATLPFFRRSSKGNPEIFFAGHHLESRYLSELMEYLKDRDFSVNVISKSGTTTEPAIAFRLFWELLRKKYGASAASRVVATTDFSKGTLKTFANVEGFETFTIPDNVGGRYSVLTPVGLFPLAAAGIPIRKFILGSQNILKDLHAETDPVRNPATYYSAFRNYFLSEGRHIEILANFNPSLRYISEWWKQLFGESEGKENKGIFPASMDFTTDLHSLGQYVQEGKRILFETVLSPSDVHSNLILRPTPDNLDSLNFLSGNTLGHVNEQARLGTLLAHADGGVPCLELIFPDISPESLGEVMYFFEYSCAISGYSLGVNPFDQPGVDAYKKNMFALLNKVGFEKEGDFLRKRILGN</sequence>
<dbReference type="EC" id="5.3.1.9" evidence="1"/>
<dbReference type="EMBL" id="CP000350">
    <property type="protein sequence ID" value="ABJ75282.1"/>
    <property type="molecule type" value="Genomic_DNA"/>
</dbReference>
<dbReference type="RefSeq" id="WP_011670835.1">
    <property type="nucleotide sequence ID" value="NC_008510.1"/>
</dbReference>
<dbReference type="SMR" id="Q04UY8"/>
<dbReference type="KEGG" id="lbj:LBJ_0600"/>
<dbReference type="HOGENOM" id="CLU_037303_0_1_12"/>
<dbReference type="UniPathway" id="UPA00109">
    <property type="reaction ID" value="UER00181"/>
</dbReference>
<dbReference type="UniPathway" id="UPA00138"/>
<dbReference type="Proteomes" id="UP000000656">
    <property type="component" value="Chromosome 1"/>
</dbReference>
<dbReference type="GO" id="GO:0005829">
    <property type="term" value="C:cytosol"/>
    <property type="evidence" value="ECO:0007669"/>
    <property type="project" value="TreeGrafter"/>
</dbReference>
<dbReference type="GO" id="GO:0097367">
    <property type="term" value="F:carbohydrate derivative binding"/>
    <property type="evidence" value="ECO:0007669"/>
    <property type="project" value="InterPro"/>
</dbReference>
<dbReference type="GO" id="GO:0004347">
    <property type="term" value="F:glucose-6-phosphate isomerase activity"/>
    <property type="evidence" value="ECO:0007669"/>
    <property type="project" value="UniProtKB-UniRule"/>
</dbReference>
<dbReference type="GO" id="GO:0048029">
    <property type="term" value="F:monosaccharide binding"/>
    <property type="evidence" value="ECO:0007669"/>
    <property type="project" value="TreeGrafter"/>
</dbReference>
<dbReference type="GO" id="GO:0006094">
    <property type="term" value="P:gluconeogenesis"/>
    <property type="evidence" value="ECO:0007669"/>
    <property type="project" value="UniProtKB-UniRule"/>
</dbReference>
<dbReference type="GO" id="GO:0051156">
    <property type="term" value="P:glucose 6-phosphate metabolic process"/>
    <property type="evidence" value="ECO:0007669"/>
    <property type="project" value="TreeGrafter"/>
</dbReference>
<dbReference type="GO" id="GO:0006096">
    <property type="term" value="P:glycolytic process"/>
    <property type="evidence" value="ECO:0007669"/>
    <property type="project" value="UniProtKB-UniRule"/>
</dbReference>
<dbReference type="CDD" id="cd05015">
    <property type="entry name" value="SIS_PGI_1"/>
    <property type="match status" value="1"/>
</dbReference>
<dbReference type="CDD" id="cd05016">
    <property type="entry name" value="SIS_PGI_2"/>
    <property type="match status" value="1"/>
</dbReference>
<dbReference type="FunFam" id="3.40.50.10490:FF:000015">
    <property type="entry name" value="Glucose-6-phosphate isomerase"/>
    <property type="match status" value="1"/>
</dbReference>
<dbReference type="FunFam" id="3.40.50.10490:FF:000016">
    <property type="entry name" value="Glucose-6-phosphate isomerase"/>
    <property type="match status" value="1"/>
</dbReference>
<dbReference type="Gene3D" id="3.40.50.10490">
    <property type="entry name" value="Glucose-6-phosphate isomerase like protein, domain 1"/>
    <property type="match status" value="2"/>
</dbReference>
<dbReference type="HAMAP" id="MF_00473">
    <property type="entry name" value="G6P_isomerase"/>
    <property type="match status" value="1"/>
</dbReference>
<dbReference type="InterPro" id="IPR001672">
    <property type="entry name" value="G6P_Isomerase"/>
</dbReference>
<dbReference type="InterPro" id="IPR018189">
    <property type="entry name" value="Phosphoglucose_isomerase_CS"/>
</dbReference>
<dbReference type="InterPro" id="IPR046348">
    <property type="entry name" value="SIS_dom_sf"/>
</dbReference>
<dbReference type="InterPro" id="IPR035476">
    <property type="entry name" value="SIS_PGI_1"/>
</dbReference>
<dbReference type="InterPro" id="IPR035482">
    <property type="entry name" value="SIS_PGI_2"/>
</dbReference>
<dbReference type="NCBIfam" id="NF010697">
    <property type="entry name" value="PRK14097.1"/>
    <property type="match status" value="1"/>
</dbReference>
<dbReference type="PANTHER" id="PTHR11469">
    <property type="entry name" value="GLUCOSE-6-PHOSPHATE ISOMERASE"/>
    <property type="match status" value="1"/>
</dbReference>
<dbReference type="PANTHER" id="PTHR11469:SF1">
    <property type="entry name" value="GLUCOSE-6-PHOSPHATE ISOMERASE"/>
    <property type="match status" value="1"/>
</dbReference>
<dbReference type="Pfam" id="PF00342">
    <property type="entry name" value="PGI"/>
    <property type="match status" value="1"/>
</dbReference>
<dbReference type="PRINTS" id="PR00662">
    <property type="entry name" value="G6PISOMERASE"/>
</dbReference>
<dbReference type="SUPFAM" id="SSF53697">
    <property type="entry name" value="SIS domain"/>
    <property type="match status" value="1"/>
</dbReference>
<dbReference type="PROSITE" id="PS00765">
    <property type="entry name" value="P_GLUCOSE_ISOMERASE_1"/>
    <property type="match status" value="1"/>
</dbReference>
<dbReference type="PROSITE" id="PS51463">
    <property type="entry name" value="P_GLUCOSE_ISOMERASE_3"/>
    <property type="match status" value="1"/>
</dbReference>
<accession>Q04UY8</accession>
<reference key="1">
    <citation type="journal article" date="2006" name="Proc. Natl. Acad. Sci. U.S.A.">
        <title>Genome reduction in Leptospira borgpetersenii reflects limited transmission potential.</title>
        <authorList>
            <person name="Bulach D.M."/>
            <person name="Zuerner R.L."/>
            <person name="Wilson P."/>
            <person name="Seemann T."/>
            <person name="McGrath A."/>
            <person name="Cullen P.A."/>
            <person name="Davis J."/>
            <person name="Johnson M."/>
            <person name="Kuczek E."/>
            <person name="Alt D.P."/>
            <person name="Peterson-Burch B."/>
            <person name="Coppel R.L."/>
            <person name="Rood J.I."/>
            <person name="Davies J.K."/>
            <person name="Adler B."/>
        </authorList>
    </citation>
    <scope>NUCLEOTIDE SEQUENCE [LARGE SCALE GENOMIC DNA]</scope>
    <source>
        <strain>JB197</strain>
    </source>
</reference>
<evidence type="ECO:0000255" key="1">
    <source>
        <dbReference type="HAMAP-Rule" id="MF_00473"/>
    </source>
</evidence>
<gene>
    <name evidence="1" type="primary">pgi</name>
    <name type="ordered locus">LBJ_0600</name>
</gene>
<name>G6PI_LEPBJ</name>